<organism>
    <name type="scientific">Citrobacter koseri</name>
    <name type="common">Citrobacter diversus</name>
    <dbReference type="NCBI Taxonomy" id="545"/>
    <lineage>
        <taxon>Bacteria</taxon>
        <taxon>Pseudomonadati</taxon>
        <taxon>Pseudomonadota</taxon>
        <taxon>Gammaproteobacteria</taxon>
        <taxon>Enterobacterales</taxon>
        <taxon>Enterobacteriaceae</taxon>
        <taxon>Citrobacter</taxon>
    </lineage>
</organism>
<feature type="signal peptide" evidence="3">
    <location>
        <begin position="1"/>
        <end position="27"/>
    </location>
</feature>
<feature type="chain" id="PRO_0000016977" description="Beta-lactamase">
    <location>
        <begin position="28"/>
        <end position="294"/>
    </location>
</feature>
<feature type="active site" description="Acyl-ester intermediate">
    <location>
        <position position="76"/>
    </location>
</feature>
<feature type="active site" description="Proton acceptor" evidence="1">
    <location>
        <position position="174"/>
    </location>
</feature>
<feature type="binding site" evidence="1">
    <location>
        <begin position="240"/>
        <end position="242"/>
    </location>
    <ligand>
        <name>substrate</name>
    </ligand>
</feature>
<feature type="sequence conflict" description="In Ref. 2; AA sequence." evidence="4" ref="2">
    <original>R</original>
    <variation>G</variation>
    <location>
        <position position="28"/>
    </location>
</feature>
<feature type="sequence conflict" description="In Ref. 2; AA sequence." evidence="4" ref="2">
    <original>R</original>
    <variation>S</variation>
    <location>
        <position position="61"/>
    </location>
</feature>
<feature type="sequence conflict" description="In Ref. 2; AA sequence." evidence="4" ref="2">
    <original>TMVA</original>
    <variation>AMAT</variation>
    <location>
        <begin position="80"/>
        <end position="83"/>
    </location>
</feature>
<proteinExistence type="evidence at protein level"/>
<protein>
    <recommendedName>
        <fullName>Beta-lactamase</fullName>
        <ecNumber>3.5.2.6</ecNumber>
    </recommendedName>
    <alternativeName>
        <fullName>Penicillinase</fullName>
    </alternativeName>
</protein>
<sequence>MFKKRGRQTVLIAAVLAFFTASSPLLARTQGEPTQVQQKLAALEKQSGGRLGVALINTADRSQILYRGDERFAMCSTSKTMVAAAVLKQSETQHDILQQKMVIKKADLTNWNPVTEKYVDKEMTLAELSAATLQYSDNTAMNKLLEHLGGTSNVTAFARSIGDTTFRLDRKEPELNTAIPGDERDTTCPLAMAKSLHKLTLGDALAGAQRAQLVEWLKGNTTGGQSIRAGLPEGWVVGDKTGAGDYGTTNDIAVIWPEDRAPLILVTYFTQPQQDAKGRKDILAAAAKIVTEGL</sequence>
<reference key="1">
    <citation type="journal article" date="1991" name="FEMS Microbiol. Lett.">
        <title>Cloning and nucleotide sequencing of the gene encoding the beta-lactamase from Citrobacter diversus.</title>
        <authorList>
            <person name="Perilli M."/>
            <person name="Franceschini N."/>
            <person name="Segatore B."/>
            <person name="Amicosante G."/>
            <person name="Oratore A."/>
            <person name="Duez C."/>
            <person name="Joris B."/>
            <person name="Frere J.-M."/>
        </authorList>
    </citation>
    <scope>NUCLEOTIDE SEQUENCE [GENOMIC DNA]</scope>
    <source>
        <strain>ULA-27</strain>
    </source>
</reference>
<reference key="2">
    <citation type="journal article" date="1991" name="Biochem. J.">
        <title>Proteolytic interconversion and N-terminal sequences of the Citrobacter diversus major beta-lactamases.</title>
        <authorList>
            <person name="Franceschini N."/>
            <person name="Amicosante G."/>
            <person name="Perilli M."/>
            <person name="Maccarrone M."/>
            <person name="Oratore A."/>
            <person name="van Beeumen J."/>
            <person name="Frere J.-M."/>
        </authorList>
    </citation>
    <scope>PROTEIN SEQUENCE OF 28-83</scope>
    <source>
        <strain>ULA-27</strain>
    </source>
</reference>
<reference key="3">
    <citation type="journal article" date="1988" name="Biochem. J.">
        <title>Chromosome-encoded beta-lactamases of Citrobacter diversus. Interaction with beta-iodopenicillanate and labelling of the active site.</title>
        <authorList>
            <person name="Amicosante G."/>
            <person name="Oratore A."/>
            <person name="Joris B."/>
            <person name="Galleni M."/>
            <person name="Frere J.-M."/>
            <person name="van Beeumen J."/>
        </authorList>
    </citation>
    <scope>PROTEIN SEQUENCE OF 72-79</scope>
</reference>
<reference key="4">
    <citation type="journal article" date="1991" name="Biochem. J.">
        <title>A standard numbering scheme for the class A beta-lactamases.</title>
        <authorList>
            <person name="Ambler R.P."/>
            <person name="Coulson A.F."/>
            <person name="Frere J.M."/>
            <person name="Ghuysen J.M."/>
            <person name="Joris B."/>
            <person name="Forsman M."/>
            <person name="Levesque R.C."/>
            <person name="Tiraby G."/>
            <person name="Waley S.G."/>
        </authorList>
    </citation>
    <scope>AMINO ACID NUMBERING SCHEME</scope>
</reference>
<name>BLAC_CITKO</name>
<keyword id="KW-0046">Antibiotic resistance</keyword>
<keyword id="KW-0903">Direct protein sequencing</keyword>
<keyword id="KW-0378">Hydrolase</keyword>
<keyword id="KW-0732">Signal</keyword>
<accession>P22390</accession>
<comment type="catalytic activity">
    <reaction evidence="2">
        <text>a beta-lactam + H2O = a substituted beta-amino acid</text>
        <dbReference type="Rhea" id="RHEA:20401"/>
        <dbReference type="ChEBI" id="CHEBI:15377"/>
        <dbReference type="ChEBI" id="CHEBI:35627"/>
        <dbReference type="ChEBI" id="CHEBI:140347"/>
        <dbReference type="EC" id="3.5.2.6"/>
    </reaction>
</comment>
<comment type="miscellaneous">
    <text evidence="5">The class A beta-lactamase family has a specific amino-acid numbering system, sometimes called Ambler or ABL numbering and often misspelt as Amber. A multiple sequence alignment was used to derive a consensus sequence and then the consensus was numbered taking into account insertions and deletions. This allows use of identical numbers, e.g. for active site residues, despite differences in protein length. UniProt always uses natural numbering of residues, hence there appear to be differences in numbering between this entry and some papers.</text>
</comment>
<comment type="similarity">
    <text evidence="4">Belongs to the class-A beta-lactamase family.</text>
</comment>
<dbReference type="EC" id="3.5.2.6"/>
<dbReference type="EMBL" id="X62610">
    <property type="protein sequence ID" value="CAA44485.1"/>
    <property type="molecule type" value="Genomic_DNA"/>
</dbReference>
<dbReference type="PIR" id="S19006">
    <property type="entry name" value="S19006"/>
</dbReference>
<dbReference type="SMR" id="P22390"/>
<dbReference type="SABIO-RK" id="P22390"/>
<dbReference type="GO" id="GO:0008800">
    <property type="term" value="F:beta-lactamase activity"/>
    <property type="evidence" value="ECO:0007669"/>
    <property type="project" value="UniProtKB-EC"/>
</dbReference>
<dbReference type="GO" id="GO:0030655">
    <property type="term" value="P:beta-lactam antibiotic catabolic process"/>
    <property type="evidence" value="ECO:0007669"/>
    <property type="project" value="InterPro"/>
</dbReference>
<dbReference type="GO" id="GO:0046677">
    <property type="term" value="P:response to antibiotic"/>
    <property type="evidence" value="ECO:0007669"/>
    <property type="project" value="UniProtKB-KW"/>
</dbReference>
<dbReference type="Gene3D" id="3.40.710.10">
    <property type="entry name" value="DD-peptidase/beta-lactamase superfamily"/>
    <property type="match status" value="1"/>
</dbReference>
<dbReference type="InterPro" id="IPR012338">
    <property type="entry name" value="Beta-lactam/transpept-like"/>
</dbReference>
<dbReference type="InterPro" id="IPR045155">
    <property type="entry name" value="Beta-lactam_cat"/>
</dbReference>
<dbReference type="InterPro" id="IPR000871">
    <property type="entry name" value="Beta-lactam_class-A"/>
</dbReference>
<dbReference type="InterPro" id="IPR023650">
    <property type="entry name" value="Beta-lactam_class-A_AS"/>
</dbReference>
<dbReference type="NCBIfam" id="NF033103">
    <property type="entry name" value="bla_class_A"/>
    <property type="match status" value="1"/>
</dbReference>
<dbReference type="NCBIfam" id="NF000328">
    <property type="entry name" value="blaSED"/>
    <property type="match status" value="1"/>
</dbReference>
<dbReference type="PANTHER" id="PTHR35333">
    <property type="entry name" value="BETA-LACTAMASE"/>
    <property type="match status" value="1"/>
</dbReference>
<dbReference type="PANTHER" id="PTHR35333:SF3">
    <property type="entry name" value="BETA-LACTAMASE-TYPE TRANSPEPTIDASE FOLD CONTAINING PROTEIN"/>
    <property type="match status" value="1"/>
</dbReference>
<dbReference type="Pfam" id="PF13354">
    <property type="entry name" value="Beta-lactamase2"/>
    <property type="match status" value="1"/>
</dbReference>
<dbReference type="PRINTS" id="PR00118">
    <property type="entry name" value="BLACTAMASEA"/>
</dbReference>
<dbReference type="SUPFAM" id="SSF56601">
    <property type="entry name" value="beta-lactamase/transpeptidase-like"/>
    <property type="match status" value="1"/>
</dbReference>
<dbReference type="PROSITE" id="PS00146">
    <property type="entry name" value="BETA_LACTAMASE_A"/>
    <property type="match status" value="1"/>
</dbReference>
<evidence type="ECO:0000250" key="1"/>
<evidence type="ECO:0000255" key="2">
    <source>
        <dbReference type="PROSITE-ProRule" id="PRU10101"/>
    </source>
</evidence>
<evidence type="ECO:0000269" key="3">
    <source>
    </source>
</evidence>
<evidence type="ECO:0000305" key="4"/>
<evidence type="ECO:0000305" key="5">
    <source>
    </source>
</evidence>